<name>CERU_SHEEP</name>
<organism>
    <name type="scientific">Ovis aries</name>
    <name type="common">Sheep</name>
    <dbReference type="NCBI Taxonomy" id="9940"/>
    <lineage>
        <taxon>Eukaryota</taxon>
        <taxon>Metazoa</taxon>
        <taxon>Chordata</taxon>
        <taxon>Craniata</taxon>
        <taxon>Vertebrata</taxon>
        <taxon>Euteleostomi</taxon>
        <taxon>Mammalia</taxon>
        <taxon>Eutheria</taxon>
        <taxon>Laurasiatheria</taxon>
        <taxon>Artiodactyla</taxon>
        <taxon>Ruminantia</taxon>
        <taxon>Pecora</taxon>
        <taxon>Bovidae</taxon>
        <taxon>Caprinae</taxon>
        <taxon>Ovis</taxon>
    </lineage>
</organism>
<keyword id="KW-0106">Calcium</keyword>
<keyword id="KW-1015">Disulfide bond</keyword>
<keyword id="KW-0325">Glycoprotein</keyword>
<keyword id="KW-0479">Metal-binding</keyword>
<keyword id="KW-0560">Oxidoreductase</keyword>
<keyword id="KW-0597">Phosphoprotein</keyword>
<keyword id="KW-1185">Reference proteome</keyword>
<keyword id="KW-0677">Repeat</keyword>
<keyword id="KW-0964">Secreted</keyword>
<keyword id="KW-0732">Signal</keyword>
<keyword id="KW-0915">Sodium</keyword>
<proteinExistence type="evidence at transcript level"/>
<sequence length="1048" mass="119126">MKIFLLCIFLILCGTSVWAKDKHYYIGIIETAWNYASDHAEKKLISVDTEHSNIYLQNGPNRIGSVYKKAVYLQYTDENFRTVIEKPVWLGFLGPIIKAETGDKVYVHLKNFASRPYTFHAHGLTYYKEHEGAIYPDNTTDLQKADDKVQPGEQCLYILHANPEQGPGEEDSNCVTRIYHSHIDAPKDIASGLIGPLIHCKKDSLDEEKEKNIDKEFVVMFSVVDENLSWYLEENIKTYCSEPEKVEQDNEDFQESNRMYSVNGYAFGSLPGLSMCAEDRVKWYLFGMGNEIDVHAAFFHGQVLTSKNYRVDTINLFPATLFDAFMVAQNPGQWMLSCQNLNHLKAGLQAFFWVQDCKKSSSEDNIHGKNVRHYYIAAEEVIWNYAPSGIDAFTKENLRAPGSASEAFFEQGPTRIGGSYKKLVYREYTDASFSNQKERGPEEEHLGILGPVIAAEVGDTIRVTFHNKAAHPLSIEPIGVRVDKNNEGTYYSPTGSGPPPSGSHVAPKGTFTYEWTVPKEVGPTYKDPVCLAKMYYSGSTKDIFTGLIGPMKICRNGSLLANGRLKNVDKEFYLFPTVFDENESLLLDDNIKMFTTAPDQVDKENEDFQESNKMHSMNGFMYGNQPGLSMCQGDSVMWYLFSAGNEVDIHGIYFSGNTYLSRGERRDTANLFPQTSLSLFMQPDTAGTFDVECLTTDHYTGGMKQKYTVSQCGQRSEDLYLYLGERTYYIAAVEVEWDYSPSRKWEKELHHLQEQNLSNAFLDKEEFYIGSKYKKVVYRQFTDSTFQVPVERKGEEEHLGILGPQLHADVGDKVNIIFKNMATRPYSIHAHGVKTESSTVTPTAPGETRTYIWKIPERSGAGMGDSPCIPWVYYSTVDRVKDLFSGLIGPLIVCRKHYLKVSNPIKKLEFSLLFLVFDENESWYLDDNIKTYSDHPEKVDKANEEFMESNKMHAINGRMFGNLQGLTMHVGNEVDLHSVHFHGHSFQYQHRGIYTSDVFDLFPGTYQTLEMTPKTPGIWLLHCHVTDHIHAGMETTYTVLPNEEIKSG</sequence>
<comment type="function">
    <text evidence="1 2">Multifunctional blue, copper-binding (6-7 atoms per molecule) glycoprotein. It has ferroxidase activity oxidizing Fe(2+) to Fe(3+) without releasing radical oxygen species. It is involved in iron transport across the cell membrane. Copper ions provide a large number of enzymatic activites. Oxidizes highly toxic ferrous ions to the ferric state for further incorporation onto apo-transferrins, catalyzes Cu(+) oxidation and promotes the oxidation of biogenic amines such as norepinephrin and serotonin (By similarity). Provides Cu(2+) ions for the ascorbate-mediated deaminase degradation of the heparan sulfate chains of GPC1 (By similarity). Has glutathione peroxidase-like activity, can remove both hydrogen peroxide and lipid hydroperoxide in the presence of thiols. Also shows NO-oxidase and NO2 synthase activities that determine endocrine NO homeostasis (By similarity).</text>
</comment>
<comment type="catalytic activity">
    <reaction evidence="1">
        <text>4 Fe(2+) + O2 + 4 H(+) = 4 Fe(3+) + 2 H2O</text>
        <dbReference type="Rhea" id="RHEA:11148"/>
        <dbReference type="ChEBI" id="CHEBI:15377"/>
        <dbReference type="ChEBI" id="CHEBI:15378"/>
        <dbReference type="ChEBI" id="CHEBI:15379"/>
        <dbReference type="ChEBI" id="CHEBI:29033"/>
        <dbReference type="ChEBI" id="CHEBI:29034"/>
        <dbReference type="EC" id="1.16.3.1"/>
    </reaction>
    <physiologicalReaction direction="right-to-left" evidence="1">
        <dbReference type="Rhea" id="RHEA:11150"/>
    </physiologicalReaction>
</comment>
<comment type="catalytic activity">
    <reaction evidence="1">
        <text>4 Cu(+) + O2 + 4 H(+) = 4 Cu(2+) + 2 H2O</text>
        <dbReference type="Rhea" id="RHEA:30083"/>
        <dbReference type="ChEBI" id="CHEBI:15377"/>
        <dbReference type="ChEBI" id="CHEBI:15378"/>
        <dbReference type="ChEBI" id="CHEBI:15379"/>
        <dbReference type="ChEBI" id="CHEBI:29036"/>
        <dbReference type="ChEBI" id="CHEBI:49552"/>
        <dbReference type="EC" id="1.16.3.4"/>
    </reaction>
    <physiologicalReaction direction="left-to-right" evidence="1">
        <dbReference type="Rhea" id="RHEA:30084"/>
    </physiologicalReaction>
</comment>
<comment type="catalytic activity">
    <reaction evidence="1">
        <text>a hydroperoxide + 2 glutathione = an alcohol + glutathione disulfide + H2O</text>
        <dbReference type="Rhea" id="RHEA:62632"/>
        <dbReference type="ChEBI" id="CHEBI:15377"/>
        <dbReference type="ChEBI" id="CHEBI:30879"/>
        <dbReference type="ChEBI" id="CHEBI:35924"/>
        <dbReference type="ChEBI" id="CHEBI:57925"/>
        <dbReference type="ChEBI" id="CHEBI:58297"/>
        <dbReference type="EC" id="1.11.1.27"/>
    </reaction>
    <physiologicalReaction direction="left-to-right" evidence="1">
        <dbReference type="Rhea" id="RHEA:62633"/>
    </physiologicalReaction>
</comment>
<comment type="catalytic activity">
    <reaction evidence="1">
        <text>4 nitric oxide + O2 + 2 H2O = 4 nitrite + 4 H(+)</text>
        <dbReference type="Rhea" id="RHEA:78539"/>
        <dbReference type="ChEBI" id="CHEBI:15377"/>
        <dbReference type="ChEBI" id="CHEBI:15378"/>
        <dbReference type="ChEBI" id="CHEBI:15379"/>
        <dbReference type="ChEBI" id="CHEBI:16301"/>
        <dbReference type="ChEBI" id="CHEBI:16480"/>
    </reaction>
    <physiologicalReaction direction="left-to-right" evidence="1">
        <dbReference type="Rhea" id="RHEA:78540"/>
    </physiologicalReaction>
</comment>
<comment type="catalytic activity">
    <reaction evidence="1">
        <text>2 glutathione + H2O2 = glutathione disulfide + 2 H2O</text>
        <dbReference type="Rhea" id="RHEA:16833"/>
        <dbReference type="ChEBI" id="CHEBI:15377"/>
        <dbReference type="ChEBI" id="CHEBI:16240"/>
        <dbReference type="ChEBI" id="CHEBI:57925"/>
        <dbReference type="ChEBI" id="CHEBI:58297"/>
        <dbReference type="EC" id="1.11.1.9"/>
    </reaction>
    <physiologicalReaction direction="left-to-right" evidence="1">
        <dbReference type="Rhea" id="RHEA:16834"/>
    </physiologicalReaction>
</comment>
<comment type="cofactor">
    <cofactor evidence="1">
        <name>Cu(2+)</name>
        <dbReference type="ChEBI" id="CHEBI:29036"/>
    </cofactor>
    <text evidence="1">Binds 6 Cu(2+) cations per monomer.</text>
</comment>
<comment type="subunit">
    <text evidence="1">Found in a complex with MPO and LTF; interacts directly with MPO and LTF, which allows Fe(3+) incorporation into LTF, activation of CP ferroxidase activity and protection of CP antioxidant properties by MPO.</text>
</comment>
<comment type="subcellular location">
    <subcellularLocation>
        <location evidence="1">Secreted</location>
    </subcellularLocation>
    <text evidence="2">Colocalizes with GCP1 in secretory intracellular compartments.</text>
</comment>
<comment type="tissue specificity">
    <text evidence="4">Expressed by the liver and secreted in plasma. Also expressed in the hypothalamus, spleen and uterus. No expression in the cortex, heart, intestine or kidney.</text>
</comment>
<comment type="similarity">
    <text evidence="5">Belongs to the multicopper oxidase family.</text>
</comment>
<feature type="signal peptide" evidence="3">
    <location>
        <begin position="1"/>
        <end position="19"/>
    </location>
</feature>
<feature type="chain" id="PRO_0000227940" description="Ceruloplasmin">
    <location>
        <begin position="20"/>
        <end position="1048"/>
    </location>
</feature>
<feature type="domain" description="Plastocyanin-like 1" evidence="1">
    <location>
        <begin position="20"/>
        <end position="200"/>
    </location>
</feature>
<feature type="domain" description="Plastocyanin-like 2" evidence="1">
    <location>
        <begin position="209"/>
        <end position="357"/>
    </location>
</feature>
<feature type="domain" description="Plastocyanin-like 3" evidence="1">
    <location>
        <begin position="370"/>
        <end position="554"/>
    </location>
</feature>
<feature type="domain" description="Plastocyanin-like 4" evidence="1">
    <location>
        <begin position="564"/>
        <end position="712"/>
    </location>
</feature>
<feature type="domain" description="Plastocyanin-like 5" evidence="1">
    <location>
        <begin position="724"/>
        <end position="894"/>
    </location>
</feature>
<feature type="domain" description="Plastocyanin-like 6" evidence="1">
    <location>
        <begin position="902"/>
        <end position="1044"/>
    </location>
</feature>
<feature type="active site" description="Nucleophile; for glutathione peroxidase activity" evidence="1">
    <location>
        <position position="693"/>
    </location>
</feature>
<feature type="binding site" evidence="1">
    <location>
        <position position="55"/>
    </location>
    <ligand>
        <name>Na(+)</name>
        <dbReference type="ChEBI" id="CHEBI:29101"/>
        <label>1</label>
    </ligand>
</feature>
<feature type="binding site" evidence="1">
    <location>
        <position position="64"/>
    </location>
    <ligand>
        <name>Na(+)</name>
        <dbReference type="ChEBI" id="CHEBI:29101"/>
        <label>1</label>
    </ligand>
</feature>
<feature type="binding site" evidence="1">
    <location>
        <position position="67"/>
    </location>
    <ligand>
        <name>Na(+)</name>
        <dbReference type="ChEBI" id="CHEBI:29101"/>
        <label>1</label>
    </ligand>
</feature>
<feature type="binding site" description="type 2 copper site" evidence="1">
    <location>
        <position position="120"/>
    </location>
    <ligand>
        <name>Cu(2+)</name>
        <dbReference type="ChEBI" id="CHEBI:29036"/>
        <label>1</label>
    </ligand>
</feature>
<feature type="binding site" evidence="1">
    <location>
        <position position="120"/>
    </location>
    <ligand>
        <name>O2</name>
        <dbReference type="ChEBI" id="CHEBI:15379"/>
    </ligand>
</feature>
<feature type="binding site" description="type 3 copper site" evidence="1">
    <location>
        <position position="122"/>
    </location>
    <ligand>
        <name>Cu(2+)</name>
        <dbReference type="ChEBI" id="CHEBI:29036"/>
        <label>2</label>
    </ligand>
</feature>
<feature type="binding site" evidence="1">
    <location>
        <position position="128"/>
    </location>
    <ligand>
        <name>Ca(2+)</name>
        <dbReference type="ChEBI" id="CHEBI:29108"/>
    </ligand>
</feature>
<feature type="binding site" evidence="1">
    <location>
        <position position="143"/>
    </location>
    <ligand>
        <name>Ca(2+)</name>
        <dbReference type="ChEBI" id="CHEBI:29108"/>
    </ligand>
</feature>
<feature type="binding site" evidence="1">
    <location>
        <position position="146"/>
    </location>
    <ligand>
        <name>Ca(2+)</name>
        <dbReference type="ChEBI" id="CHEBI:29108"/>
    </ligand>
</feature>
<feature type="binding site" evidence="1">
    <location>
        <position position="147"/>
    </location>
    <ligand>
        <name>Ca(2+)</name>
        <dbReference type="ChEBI" id="CHEBI:29108"/>
    </ligand>
</feature>
<feature type="binding site" description="type 3 copper site" evidence="1">
    <location>
        <position position="180"/>
    </location>
    <ligand>
        <name>Cu(2+)</name>
        <dbReference type="ChEBI" id="CHEBI:29036"/>
        <label>2</label>
    </ligand>
</feature>
<feature type="binding site" evidence="1">
    <location>
        <position position="180"/>
    </location>
    <ligand>
        <name>O2</name>
        <dbReference type="ChEBI" id="CHEBI:15379"/>
    </ligand>
</feature>
<feature type="binding site" description="type 3 copper site" evidence="1">
    <location>
        <position position="182"/>
    </location>
    <ligand>
        <name>Cu(2+)</name>
        <dbReference type="ChEBI" id="CHEBI:29036"/>
        <label>3</label>
    </ligand>
</feature>
<feature type="binding site" evidence="1">
    <location>
        <position position="256"/>
    </location>
    <ligand>
        <name>Na(+)</name>
        <dbReference type="ChEBI" id="CHEBI:29101"/>
        <label>1</label>
    </ligand>
</feature>
<feature type="binding site" description="type 1 copper site" evidence="1">
    <location>
        <position position="295"/>
    </location>
    <ligand>
        <name>Cu(2+)</name>
        <dbReference type="ChEBI" id="CHEBI:29036"/>
        <label>4</label>
    </ligand>
</feature>
<feature type="binding site" description="type 1 copper site" evidence="1">
    <location>
        <position position="338"/>
    </location>
    <ligand>
        <name>Cu(2+)</name>
        <dbReference type="ChEBI" id="CHEBI:29036"/>
        <label>4</label>
    </ligand>
</feature>
<feature type="binding site" description="type 1 copper site" evidence="1">
    <location>
        <position position="343"/>
    </location>
    <ligand>
        <name>Cu(2+)</name>
        <dbReference type="ChEBI" id="CHEBI:29036"/>
        <label>4</label>
    </ligand>
</feature>
<feature type="binding site" evidence="1">
    <location>
        <position position="408"/>
    </location>
    <ligand>
        <name>Na(+)</name>
        <dbReference type="ChEBI" id="CHEBI:29101"/>
        <label>2</label>
    </ligand>
</feature>
<feature type="binding site" evidence="1">
    <location>
        <position position="417"/>
    </location>
    <ligand>
        <name>Na(+)</name>
        <dbReference type="ChEBI" id="CHEBI:29101"/>
        <label>2</label>
    </ligand>
</feature>
<feature type="binding site" evidence="1">
    <location>
        <position position="420"/>
    </location>
    <ligand>
        <name>Na(+)</name>
        <dbReference type="ChEBI" id="CHEBI:29101"/>
        <label>2</label>
    </ligand>
</feature>
<feature type="binding site" evidence="1">
    <location>
        <position position="611"/>
    </location>
    <ligand>
        <name>Na(+)</name>
        <dbReference type="ChEBI" id="CHEBI:29101"/>
        <label>2</label>
    </ligand>
</feature>
<feature type="binding site" description="type 1 copper site" evidence="1">
    <location>
        <position position="650"/>
    </location>
    <ligand>
        <name>Cu(2+)</name>
        <dbReference type="ChEBI" id="CHEBI:29036"/>
        <label>5</label>
    </ligand>
</feature>
<feature type="binding site" description="type 1 copper site" evidence="1">
    <location>
        <position position="693"/>
    </location>
    <ligand>
        <name>Cu(2+)</name>
        <dbReference type="ChEBI" id="CHEBI:29036"/>
        <label>5</label>
    </ligand>
</feature>
<feature type="binding site" description="type 1 copper site" evidence="1">
    <location>
        <position position="698"/>
    </location>
    <ligand>
        <name>Cu(2+)</name>
        <dbReference type="ChEBI" id="CHEBI:29036"/>
        <label>5</label>
    </ligand>
</feature>
<feature type="binding site" description="type 1 copper site" evidence="1">
    <location>
        <position position="703"/>
    </location>
    <ligand>
        <name>Cu(2+)</name>
        <dbReference type="ChEBI" id="CHEBI:29036"/>
        <label>5</label>
    </ligand>
</feature>
<feature type="binding site" evidence="1">
    <location>
        <position position="761"/>
    </location>
    <ligand>
        <name>Na(+)</name>
        <dbReference type="ChEBI" id="CHEBI:29101"/>
        <label>3</label>
    </ligand>
</feature>
<feature type="binding site" evidence="1">
    <location>
        <position position="770"/>
    </location>
    <ligand>
        <name>Na(+)</name>
        <dbReference type="ChEBI" id="CHEBI:29101"/>
        <label>3</label>
    </ligand>
</feature>
<feature type="binding site" evidence="1">
    <location>
        <position position="773"/>
    </location>
    <ligand>
        <name>Na(+)</name>
        <dbReference type="ChEBI" id="CHEBI:29101"/>
        <label>3</label>
    </ligand>
</feature>
<feature type="binding site" evidence="1">
    <location>
        <position position="949"/>
    </location>
    <ligand>
        <name>Na(+)</name>
        <dbReference type="ChEBI" id="CHEBI:29101"/>
        <label>3</label>
    </ligand>
</feature>
<feature type="binding site" description="type 1 copper site" evidence="1">
    <location>
        <position position="977"/>
    </location>
    <ligand>
        <name>Cu(2+)</name>
        <dbReference type="ChEBI" id="CHEBI:29036"/>
        <label>6</label>
    </ligand>
</feature>
<feature type="binding site" description="type 2 copper site" evidence="1">
    <location>
        <position position="980"/>
    </location>
    <ligand>
        <name>Cu(2+)</name>
        <dbReference type="ChEBI" id="CHEBI:29036"/>
        <label>1</label>
    </ligand>
</feature>
<feature type="binding site" evidence="1">
    <location>
        <position position="980"/>
    </location>
    <ligand>
        <name>O2</name>
        <dbReference type="ChEBI" id="CHEBI:15379"/>
    </ligand>
</feature>
<feature type="binding site" description="type 3 copper site" evidence="1">
    <location>
        <position position="982"/>
    </location>
    <ligand>
        <name>Cu(2+)</name>
        <dbReference type="ChEBI" id="CHEBI:29036"/>
        <label>3</label>
    </ligand>
</feature>
<feature type="binding site" evidence="1">
    <location>
        <position position="982"/>
    </location>
    <ligand>
        <name>O2</name>
        <dbReference type="ChEBI" id="CHEBI:15379"/>
    </ligand>
</feature>
<feature type="binding site" description="type 3 copper site" evidence="1">
    <location>
        <position position="1022"/>
    </location>
    <ligand>
        <name>Cu(2+)</name>
        <dbReference type="ChEBI" id="CHEBI:29036"/>
        <label>3</label>
    </ligand>
</feature>
<feature type="binding site" description="type 1 copper site" evidence="1">
    <location>
        <position position="1023"/>
    </location>
    <ligand>
        <name>Cu(2+)</name>
        <dbReference type="ChEBI" id="CHEBI:29036"/>
        <label>6</label>
    </ligand>
</feature>
<feature type="binding site" description="type 3 copper site" evidence="1">
    <location>
        <position position="1024"/>
    </location>
    <ligand>
        <name>Cu(2+)</name>
        <dbReference type="ChEBI" id="CHEBI:29036"/>
        <label>2</label>
    </ligand>
</feature>
<feature type="binding site" evidence="1">
    <location>
        <position position="1024"/>
    </location>
    <ligand>
        <name>O2</name>
        <dbReference type="ChEBI" id="CHEBI:15379"/>
    </ligand>
</feature>
<feature type="binding site" description="type 1 copper site" evidence="1">
    <location>
        <position position="1028"/>
    </location>
    <ligand>
        <name>Cu(2+)</name>
        <dbReference type="ChEBI" id="CHEBI:29036"/>
        <label>6</label>
    </ligand>
</feature>
<feature type="binding site" description="type 1 copper site" evidence="1">
    <location>
        <position position="1033"/>
    </location>
    <ligand>
        <name>Cu(2+)</name>
        <dbReference type="ChEBI" id="CHEBI:29036"/>
        <label>6</label>
    </ligand>
</feature>
<feature type="modified residue" description="Phosphoserine" evidence="1">
    <location>
        <position position="716"/>
    </location>
</feature>
<feature type="glycosylation site" description="N-linked (GlcNAc...) asparagine" evidence="3">
    <location>
        <position position="138"/>
    </location>
</feature>
<feature type="glycosylation site" description="N-linked (GlcNAc...) asparagine" evidence="3">
    <location>
        <position position="227"/>
    </location>
</feature>
<feature type="glycosylation site" description="N-linked (GlcNAc...) asparagine" evidence="3">
    <location>
        <position position="556"/>
    </location>
</feature>
<feature type="glycosylation site" description="N-linked (GlcNAc...) asparagine" evidence="3">
    <location>
        <position position="582"/>
    </location>
</feature>
<feature type="glycosylation site" description="N-linked (GlcNAc...) asparagine" evidence="3">
    <location>
        <position position="756"/>
    </location>
</feature>
<feature type="glycosylation site" description="N-linked (GlcNAc...) asparagine" evidence="3">
    <location>
        <position position="920"/>
    </location>
</feature>
<feature type="disulfide bond" evidence="1">
    <location>
        <begin position="174"/>
        <end position="200"/>
    </location>
</feature>
<feature type="disulfide bond" evidence="1">
    <location>
        <begin position="276"/>
        <end position="357"/>
    </location>
</feature>
<feature type="disulfide bond" evidence="1">
    <location>
        <begin position="530"/>
        <end position="554"/>
    </location>
</feature>
<feature type="disulfide bond" evidence="1">
    <location>
        <begin position="631"/>
        <end position="712"/>
    </location>
</feature>
<feature type="disulfide bond" evidence="1">
    <location>
        <begin position="868"/>
        <end position="894"/>
    </location>
</feature>
<accession>Q9XT27</accession>
<gene>
    <name type="primary">CP</name>
</gene>
<protein>
    <recommendedName>
        <fullName>Ceruloplasmin</fullName>
    </recommendedName>
    <alternativeName>
        <fullName>Cuproxidase ceruloplasmin</fullName>
        <ecNumber evidence="1">1.16.3.4</ecNumber>
    </alternativeName>
    <alternativeName>
        <fullName>Ferroxidase ceruloplasmin</fullName>
        <ecNumber evidence="1">1.16.3.1</ecNumber>
    </alternativeName>
    <alternativeName>
        <fullName>Glutathione peroxidase ceruloplasmin</fullName>
        <ecNumber evidence="1">1.11.1.9</ecNumber>
    </alternativeName>
    <alternativeName>
        <fullName>Glutathione-dependent peroxiredoxin ceruloplasmin</fullName>
        <ecNumber evidence="1">1.11.1.27</ecNumber>
    </alternativeName>
</protein>
<dbReference type="EC" id="1.16.3.4" evidence="1"/>
<dbReference type="EC" id="1.16.3.1" evidence="1"/>
<dbReference type="EC" id="1.11.1.9" evidence="1"/>
<dbReference type="EC" id="1.11.1.27" evidence="1"/>
<dbReference type="EMBL" id="AF134814">
    <property type="protein sequence ID" value="AAD41477.1"/>
    <property type="molecule type" value="mRNA"/>
</dbReference>
<dbReference type="RefSeq" id="NP_001009733.1">
    <property type="nucleotide sequence ID" value="NM_001009733.1"/>
</dbReference>
<dbReference type="SMR" id="Q9XT27"/>
<dbReference type="STRING" id="9940.ENSOARP00000005423"/>
<dbReference type="GlyCosmos" id="Q9XT27">
    <property type="glycosylation" value="6 sites, No reported glycans"/>
</dbReference>
<dbReference type="PaxDb" id="9940-ENSOARP00000005423"/>
<dbReference type="GeneID" id="443053"/>
<dbReference type="KEGG" id="oas:443053"/>
<dbReference type="CTD" id="1356"/>
<dbReference type="eggNOG" id="KOG1263">
    <property type="taxonomic scope" value="Eukaryota"/>
</dbReference>
<dbReference type="OrthoDB" id="2121828at2759"/>
<dbReference type="Proteomes" id="UP000002356">
    <property type="component" value="Unplaced"/>
</dbReference>
<dbReference type="GO" id="GO:0005615">
    <property type="term" value="C:extracellular space"/>
    <property type="evidence" value="ECO:0000250"/>
    <property type="project" value="UniProtKB"/>
</dbReference>
<dbReference type="GO" id="GO:0005886">
    <property type="term" value="C:plasma membrane"/>
    <property type="evidence" value="ECO:0007669"/>
    <property type="project" value="TreeGrafter"/>
</dbReference>
<dbReference type="GO" id="GO:0005507">
    <property type="term" value="F:copper ion binding"/>
    <property type="evidence" value="ECO:0007669"/>
    <property type="project" value="InterPro"/>
</dbReference>
<dbReference type="GO" id="GO:0004322">
    <property type="term" value="F:ferroxidase activity"/>
    <property type="evidence" value="ECO:0000250"/>
    <property type="project" value="UniProtKB"/>
</dbReference>
<dbReference type="GO" id="GO:0004602">
    <property type="term" value="F:glutathione peroxidase activity"/>
    <property type="evidence" value="ECO:0000250"/>
    <property type="project" value="UniProtKB"/>
</dbReference>
<dbReference type="GO" id="GO:0016724">
    <property type="term" value="F:oxidoreductase activity, acting on metal ions, oxygen as acceptor"/>
    <property type="evidence" value="ECO:0000250"/>
    <property type="project" value="UniProtKB"/>
</dbReference>
<dbReference type="GO" id="GO:0047066">
    <property type="term" value="F:phospholipid-hydroperoxide glutathione peroxidase activity"/>
    <property type="evidence" value="ECO:0000250"/>
    <property type="project" value="UniProtKB"/>
</dbReference>
<dbReference type="GO" id="GO:0006878">
    <property type="term" value="P:intracellular copper ion homeostasis"/>
    <property type="evidence" value="ECO:0000250"/>
    <property type="project" value="UniProtKB"/>
</dbReference>
<dbReference type="GO" id="GO:0006879">
    <property type="term" value="P:intracellular iron ion homeostasis"/>
    <property type="evidence" value="ECO:0000250"/>
    <property type="project" value="UniProtKB"/>
</dbReference>
<dbReference type="GO" id="GO:0006826">
    <property type="term" value="P:iron ion transport"/>
    <property type="evidence" value="ECO:0007669"/>
    <property type="project" value="TreeGrafter"/>
</dbReference>
<dbReference type="CDD" id="cd11021">
    <property type="entry name" value="CuRO_2_ceruloplasmin"/>
    <property type="match status" value="1"/>
</dbReference>
<dbReference type="CDD" id="cd11022">
    <property type="entry name" value="CuRO_4_ceruloplasmin"/>
    <property type="match status" value="1"/>
</dbReference>
<dbReference type="CDD" id="cd04225">
    <property type="entry name" value="CuRO_5_ceruloplasmin"/>
    <property type="match status" value="1"/>
</dbReference>
<dbReference type="FunFam" id="2.60.40.420:FF:000009">
    <property type="entry name" value="Ceruloplasmin"/>
    <property type="match status" value="1"/>
</dbReference>
<dbReference type="FunFam" id="2.60.40.420:FF:000015">
    <property type="entry name" value="Ceruloplasmin"/>
    <property type="match status" value="1"/>
</dbReference>
<dbReference type="FunFam" id="2.60.40.420:FF:000028">
    <property type="entry name" value="Ceruloplasmin"/>
    <property type="match status" value="1"/>
</dbReference>
<dbReference type="FunFam" id="2.60.40.420:FF:000033">
    <property type="entry name" value="Ceruloplasmin"/>
    <property type="match status" value="1"/>
</dbReference>
<dbReference type="FunFam" id="2.60.40.420:FF:000037">
    <property type="entry name" value="Ceruloplasmin"/>
    <property type="match status" value="1"/>
</dbReference>
<dbReference type="Gene3D" id="2.60.40.420">
    <property type="entry name" value="Cupredoxins - blue copper proteins"/>
    <property type="match status" value="5"/>
</dbReference>
<dbReference type="InterPro" id="IPR048236">
    <property type="entry name" value="Ceruloplasmin-like_CuRO_5"/>
</dbReference>
<dbReference type="InterPro" id="IPR011707">
    <property type="entry name" value="Cu-oxidase-like_N"/>
</dbReference>
<dbReference type="InterPro" id="IPR001117">
    <property type="entry name" value="Cu-oxidase_2nd"/>
</dbReference>
<dbReference type="InterPro" id="IPR011706">
    <property type="entry name" value="Cu-oxidase_C"/>
</dbReference>
<dbReference type="InterPro" id="IPR045087">
    <property type="entry name" value="Cu-oxidase_fam"/>
</dbReference>
<dbReference type="InterPro" id="IPR033138">
    <property type="entry name" value="Cu_oxidase_CS"/>
</dbReference>
<dbReference type="InterPro" id="IPR002355">
    <property type="entry name" value="Cu_oxidase_Cu_BS"/>
</dbReference>
<dbReference type="InterPro" id="IPR008972">
    <property type="entry name" value="Cupredoxin"/>
</dbReference>
<dbReference type="PANTHER" id="PTHR11709:SF226">
    <property type="entry name" value="CERULOPLASMIN"/>
    <property type="match status" value="1"/>
</dbReference>
<dbReference type="PANTHER" id="PTHR11709">
    <property type="entry name" value="MULTI-COPPER OXIDASE"/>
    <property type="match status" value="1"/>
</dbReference>
<dbReference type="Pfam" id="PF00394">
    <property type="entry name" value="Cu-oxidase"/>
    <property type="match status" value="1"/>
</dbReference>
<dbReference type="Pfam" id="PF07731">
    <property type="entry name" value="Cu-oxidase_2"/>
    <property type="match status" value="1"/>
</dbReference>
<dbReference type="Pfam" id="PF07732">
    <property type="entry name" value="Cu-oxidase_3"/>
    <property type="match status" value="3"/>
</dbReference>
<dbReference type="SUPFAM" id="SSF49503">
    <property type="entry name" value="Cupredoxins"/>
    <property type="match status" value="6"/>
</dbReference>
<dbReference type="PROSITE" id="PS00079">
    <property type="entry name" value="MULTICOPPER_OXIDASE1"/>
    <property type="match status" value="3"/>
</dbReference>
<dbReference type="PROSITE" id="PS00080">
    <property type="entry name" value="MULTICOPPER_OXIDASE2"/>
    <property type="match status" value="1"/>
</dbReference>
<reference key="1">
    <citation type="journal article" date="1999" name="Gene">
        <title>Cloning and expression analysis of the sheep ceruloplasmin cDNA.</title>
        <authorList>
            <person name="Lockhart P.J."/>
            <person name="Mercer J.F.B."/>
        </authorList>
    </citation>
    <scope>NUCLEOTIDE SEQUENCE [MRNA]</scope>
    <scope>TISSUE SPECIFICITY</scope>
    <source>
        <tissue>Liver</tissue>
    </source>
</reference>
<evidence type="ECO:0000250" key="1">
    <source>
        <dbReference type="UniProtKB" id="P00450"/>
    </source>
</evidence>
<evidence type="ECO:0000250" key="2">
    <source>
        <dbReference type="UniProtKB" id="P13635"/>
    </source>
</evidence>
<evidence type="ECO:0000255" key="3"/>
<evidence type="ECO:0000269" key="4">
    <source>
    </source>
</evidence>
<evidence type="ECO:0000305" key="5"/>